<accession>Q0AIJ4</accession>
<sequence>MVKIPCRSENGQVVNIEVSDSVFDRVYNEALVHQIVTSYLANARSGTRAQKGRSEVAGSTRKQWRQKGTGRARVGAASNPLWRGGGKIFPNKPTENFTKKVNRKMYRAGMCTIFSQLLRNSKLVAISEFRVETTKTKFFLQKLKNYQLENVMIITDEVDENLYLASRNVPNIKVVEIDLIDPVSLLSYDNVVITREAVNKIESVLQ</sequence>
<protein>
    <recommendedName>
        <fullName evidence="1">Large ribosomal subunit protein uL4</fullName>
    </recommendedName>
    <alternativeName>
        <fullName evidence="3">50S ribosomal protein L4</fullName>
    </alternativeName>
</protein>
<gene>
    <name evidence="1" type="primary">rplD</name>
    <name type="ordered locus">Neut_0559</name>
</gene>
<comment type="function">
    <text evidence="1">One of the primary rRNA binding proteins, this protein initially binds near the 5'-end of the 23S rRNA. It is important during the early stages of 50S assembly. It makes multiple contacts with different domains of the 23S rRNA in the assembled 50S subunit and ribosome.</text>
</comment>
<comment type="function">
    <text evidence="1">Forms part of the polypeptide exit tunnel.</text>
</comment>
<comment type="subunit">
    <text evidence="1">Part of the 50S ribosomal subunit.</text>
</comment>
<comment type="similarity">
    <text evidence="1">Belongs to the universal ribosomal protein uL4 family.</text>
</comment>
<feature type="chain" id="PRO_1000052452" description="Large ribosomal subunit protein uL4">
    <location>
        <begin position="1"/>
        <end position="206"/>
    </location>
</feature>
<feature type="region of interest" description="Disordered" evidence="2">
    <location>
        <begin position="47"/>
        <end position="71"/>
    </location>
</feature>
<reference key="1">
    <citation type="journal article" date="2007" name="Environ. Microbiol.">
        <title>Whole-genome analysis of the ammonia-oxidizing bacterium, Nitrosomonas eutropha C91: implications for niche adaptation.</title>
        <authorList>
            <person name="Stein L.Y."/>
            <person name="Arp D.J."/>
            <person name="Berube P.M."/>
            <person name="Chain P.S."/>
            <person name="Hauser L."/>
            <person name="Jetten M.S."/>
            <person name="Klotz M.G."/>
            <person name="Larimer F.W."/>
            <person name="Norton J.M."/>
            <person name="Op den Camp H.J.M."/>
            <person name="Shin M."/>
            <person name="Wei X."/>
        </authorList>
    </citation>
    <scope>NUCLEOTIDE SEQUENCE [LARGE SCALE GENOMIC DNA]</scope>
    <source>
        <strain>DSM 101675 / C91 / Nm57</strain>
    </source>
</reference>
<dbReference type="EMBL" id="CP000450">
    <property type="protein sequence ID" value="ABI58832.1"/>
    <property type="molecule type" value="Genomic_DNA"/>
</dbReference>
<dbReference type="RefSeq" id="WP_011633674.1">
    <property type="nucleotide sequence ID" value="NC_008344.1"/>
</dbReference>
<dbReference type="SMR" id="Q0AIJ4"/>
<dbReference type="STRING" id="335283.Neut_0559"/>
<dbReference type="KEGG" id="net:Neut_0559"/>
<dbReference type="eggNOG" id="COG0088">
    <property type="taxonomic scope" value="Bacteria"/>
</dbReference>
<dbReference type="HOGENOM" id="CLU_041575_5_2_4"/>
<dbReference type="OrthoDB" id="9803201at2"/>
<dbReference type="Proteomes" id="UP000001966">
    <property type="component" value="Chromosome"/>
</dbReference>
<dbReference type="GO" id="GO:1990904">
    <property type="term" value="C:ribonucleoprotein complex"/>
    <property type="evidence" value="ECO:0007669"/>
    <property type="project" value="UniProtKB-KW"/>
</dbReference>
<dbReference type="GO" id="GO:0005840">
    <property type="term" value="C:ribosome"/>
    <property type="evidence" value="ECO:0007669"/>
    <property type="project" value="UniProtKB-KW"/>
</dbReference>
<dbReference type="GO" id="GO:0019843">
    <property type="term" value="F:rRNA binding"/>
    <property type="evidence" value="ECO:0007669"/>
    <property type="project" value="UniProtKB-UniRule"/>
</dbReference>
<dbReference type="GO" id="GO:0003735">
    <property type="term" value="F:structural constituent of ribosome"/>
    <property type="evidence" value="ECO:0007669"/>
    <property type="project" value="InterPro"/>
</dbReference>
<dbReference type="GO" id="GO:0006412">
    <property type="term" value="P:translation"/>
    <property type="evidence" value="ECO:0007669"/>
    <property type="project" value="UniProtKB-UniRule"/>
</dbReference>
<dbReference type="Gene3D" id="3.40.1370.10">
    <property type="match status" value="1"/>
</dbReference>
<dbReference type="HAMAP" id="MF_01328_B">
    <property type="entry name" value="Ribosomal_uL4_B"/>
    <property type="match status" value="1"/>
</dbReference>
<dbReference type="InterPro" id="IPR002136">
    <property type="entry name" value="Ribosomal_uL4"/>
</dbReference>
<dbReference type="InterPro" id="IPR013005">
    <property type="entry name" value="Ribosomal_uL4-like"/>
</dbReference>
<dbReference type="InterPro" id="IPR023574">
    <property type="entry name" value="Ribosomal_uL4_dom_sf"/>
</dbReference>
<dbReference type="NCBIfam" id="TIGR03953">
    <property type="entry name" value="rplD_bact"/>
    <property type="match status" value="1"/>
</dbReference>
<dbReference type="PANTHER" id="PTHR10746">
    <property type="entry name" value="50S RIBOSOMAL PROTEIN L4"/>
    <property type="match status" value="1"/>
</dbReference>
<dbReference type="PANTHER" id="PTHR10746:SF6">
    <property type="entry name" value="LARGE RIBOSOMAL SUBUNIT PROTEIN UL4M"/>
    <property type="match status" value="1"/>
</dbReference>
<dbReference type="Pfam" id="PF00573">
    <property type="entry name" value="Ribosomal_L4"/>
    <property type="match status" value="1"/>
</dbReference>
<dbReference type="SUPFAM" id="SSF52166">
    <property type="entry name" value="Ribosomal protein L4"/>
    <property type="match status" value="1"/>
</dbReference>
<evidence type="ECO:0000255" key="1">
    <source>
        <dbReference type="HAMAP-Rule" id="MF_01328"/>
    </source>
</evidence>
<evidence type="ECO:0000256" key="2">
    <source>
        <dbReference type="SAM" id="MobiDB-lite"/>
    </source>
</evidence>
<evidence type="ECO:0000305" key="3"/>
<organism>
    <name type="scientific">Nitrosomonas eutropha (strain DSM 101675 / C91 / Nm57)</name>
    <dbReference type="NCBI Taxonomy" id="335283"/>
    <lineage>
        <taxon>Bacteria</taxon>
        <taxon>Pseudomonadati</taxon>
        <taxon>Pseudomonadota</taxon>
        <taxon>Betaproteobacteria</taxon>
        <taxon>Nitrosomonadales</taxon>
        <taxon>Nitrosomonadaceae</taxon>
        <taxon>Nitrosomonas</taxon>
    </lineage>
</organism>
<name>RL4_NITEC</name>
<proteinExistence type="inferred from homology"/>
<keyword id="KW-0687">Ribonucleoprotein</keyword>
<keyword id="KW-0689">Ribosomal protein</keyword>
<keyword id="KW-0694">RNA-binding</keyword>
<keyword id="KW-0699">rRNA-binding</keyword>